<accession>A0KYQ9</accession>
<evidence type="ECO:0000250" key="1"/>
<evidence type="ECO:0000255" key="2">
    <source>
        <dbReference type="PROSITE-ProRule" id="PRU00648"/>
    </source>
</evidence>
<evidence type="ECO:0000305" key="3"/>
<dbReference type="EC" id="3.2.1.-"/>
<dbReference type="EMBL" id="CP000469">
    <property type="protein sequence ID" value="ABK48928.1"/>
    <property type="molecule type" value="Genomic_DNA"/>
</dbReference>
<dbReference type="RefSeq" id="WP_011717585.1">
    <property type="nucleotide sequence ID" value="NC_008577.1"/>
</dbReference>
<dbReference type="SMR" id="A0KYQ9"/>
<dbReference type="STRING" id="94122.Shewana3_2701"/>
<dbReference type="CAZy" id="GH109">
    <property type="family name" value="Glycoside Hydrolase Family 109"/>
</dbReference>
<dbReference type="KEGG" id="shn:Shewana3_2701"/>
<dbReference type="eggNOG" id="COG0673">
    <property type="taxonomic scope" value="Bacteria"/>
</dbReference>
<dbReference type="HOGENOM" id="CLU_046965_0_0_6"/>
<dbReference type="OrthoDB" id="9792935at2"/>
<dbReference type="Proteomes" id="UP000002589">
    <property type="component" value="Chromosome"/>
</dbReference>
<dbReference type="GO" id="GO:0016798">
    <property type="term" value="F:hydrolase activity, acting on glycosyl bonds"/>
    <property type="evidence" value="ECO:0007669"/>
    <property type="project" value="UniProtKB-KW"/>
</dbReference>
<dbReference type="GO" id="GO:0000166">
    <property type="term" value="F:nucleotide binding"/>
    <property type="evidence" value="ECO:0007669"/>
    <property type="project" value="InterPro"/>
</dbReference>
<dbReference type="Gene3D" id="3.30.360.10">
    <property type="entry name" value="Dihydrodipicolinate Reductase, domain 2"/>
    <property type="match status" value="1"/>
</dbReference>
<dbReference type="Gene3D" id="3.40.50.720">
    <property type="entry name" value="NAD(P)-binding Rossmann-like Domain"/>
    <property type="match status" value="1"/>
</dbReference>
<dbReference type="InterPro" id="IPR000683">
    <property type="entry name" value="Gfo/Idh/MocA-like_OxRdtase_N"/>
</dbReference>
<dbReference type="InterPro" id="IPR050463">
    <property type="entry name" value="Gfo/Idh/MocA_oxidrdct_glycsds"/>
</dbReference>
<dbReference type="InterPro" id="IPR049303">
    <property type="entry name" value="Glyco_hydro_109_C"/>
</dbReference>
<dbReference type="InterPro" id="IPR036291">
    <property type="entry name" value="NAD(P)-bd_dom_sf"/>
</dbReference>
<dbReference type="InterPro" id="IPR006311">
    <property type="entry name" value="TAT_signal"/>
</dbReference>
<dbReference type="InterPro" id="IPR019546">
    <property type="entry name" value="TAT_signal_bac_arc"/>
</dbReference>
<dbReference type="PANTHER" id="PTHR43818">
    <property type="entry name" value="BCDNA.GH03377"/>
    <property type="match status" value="1"/>
</dbReference>
<dbReference type="PANTHER" id="PTHR43818:SF1">
    <property type="entry name" value="GLYCOSYL HYDROLASE FAMILY 109 PROTEIN"/>
    <property type="match status" value="1"/>
</dbReference>
<dbReference type="Pfam" id="PF01408">
    <property type="entry name" value="GFO_IDH_MocA"/>
    <property type="match status" value="1"/>
</dbReference>
<dbReference type="Pfam" id="PF21252">
    <property type="entry name" value="Glyco_hydro_109_C"/>
    <property type="match status" value="1"/>
</dbReference>
<dbReference type="Pfam" id="PF10518">
    <property type="entry name" value="TAT_signal"/>
    <property type="match status" value="1"/>
</dbReference>
<dbReference type="SUPFAM" id="SSF51735">
    <property type="entry name" value="NAD(P)-binding Rossmann-fold domains"/>
    <property type="match status" value="1"/>
</dbReference>
<dbReference type="PROSITE" id="PS51318">
    <property type="entry name" value="TAT"/>
    <property type="match status" value="1"/>
</dbReference>
<organism>
    <name type="scientific">Shewanella sp. (strain ANA-3)</name>
    <dbReference type="NCBI Taxonomy" id="94122"/>
    <lineage>
        <taxon>Bacteria</taxon>
        <taxon>Pseudomonadati</taxon>
        <taxon>Pseudomonadota</taxon>
        <taxon>Gammaproteobacteria</taxon>
        <taxon>Alteromonadales</taxon>
        <taxon>Shewanellaceae</taxon>
        <taxon>Shewanella</taxon>
    </lineage>
</organism>
<feature type="signal peptide" description="Tat-type signal" evidence="2">
    <location>
        <begin position="1"/>
        <end position="33"/>
    </location>
</feature>
<feature type="chain" id="PRO_0000348564" description="Glycosyl hydrolase family 109 protein 2">
    <location>
        <begin position="34"/>
        <end position="456"/>
    </location>
</feature>
<feature type="binding site" evidence="1">
    <location>
        <begin position="63"/>
        <end position="64"/>
    </location>
    <ligand>
        <name>NAD(+)</name>
        <dbReference type="ChEBI" id="CHEBI:57540"/>
    </ligand>
</feature>
<feature type="binding site" evidence="1">
    <location>
        <position position="85"/>
    </location>
    <ligand>
        <name>NAD(+)</name>
        <dbReference type="ChEBI" id="CHEBI:57540"/>
    </ligand>
</feature>
<feature type="binding site" evidence="1">
    <location>
        <begin position="134"/>
        <end position="137"/>
    </location>
    <ligand>
        <name>NAD(+)</name>
        <dbReference type="ChEBI" id="CHEBI:57540"/>
    </ligand>
</feature>
<feature type="binding site" evidence="1">
    <location>
        <begin position="154"/>
        <end position="155"/>
    </location>
    <ligand>
        <name>NAD(+)</name>
        <dbReference type="ChEBI" id="CHEBI:57540"/>
    </ligand>
</feature>
<feature type="binding site" evidence="1">
    <location>
        <position position="183"/>
    </location>
    <ligand>
        <name>NAD(+)</name>
        <dbReference type="ChEBI" id="CHEBI:57540"/>
    </ligand>
</feature>
<feature type="binding site" evidence="1">
    <location>
        <position position="212"/>
    </location>
    <ligand>
        <name>substrate</name>
    </ligand>
</feature>
<feature type="binding site" evidence="1">
    <location>
        <position position="231"/>
    </location>
    <ligand>
        <name>substrate</name>
    </ligand>
</feature>
<feature type="binding site" evidence="1">
    <location>
        <begin position="243"/>
        <end position="246"/>
    </location>
    <ligand>
        <name>substrate</name>
    </ligand>
</feature>
<feature type="binding site" evidence="1">
    <location>
        <position position="243"/>
    </location>
    <ligand>
        <name>NAD(+)</name>
        <dbReference type="ChEBI" id="CHEBI:57540"/>
    </ligand>
</feature>
<feature type="binding site" evidence="1">
    <location>
        <position position="325"/>
    </location>
    <ligand>
        <name>substrate</name>
    </ligand>
</feature>
<name>G1092_SHESA</name>
<reference key="1">
    <citation type="submission" date="2006-09" db="EMBL/GenBank/DDBJ databases">
        <title>Complete sequence of chromosome 1 of Shewanella sp. ANA-3.</title>
        <authorList>
            <person name="Copeland A."/>
            <person name="Lucas S."/>
            <person name="Lapidus A."/>
            <person name="Barry K."/>
            <person name="Detter J.C."/>
            <person name="Glavina del Rio T."/>
            <person name="Hammon N."/>
            <person name="Israni S."/>
            <person name="Dalin E."/>
            <person name="Tice H."/>
            <person name="Pitluck S."/>
            <person name="Chertkov O."/>
            <person name="Brettin T."/>
            <person name="Bruce D."/>
            <person name="Han C."/>
            <person name="Tapia R."/>
            <person name="Gilna P."/>
            <person name="Schmutz J."/>
            <person name="Larimer F."/>
            <person name="Land M."/>
            <person name="Hauser L."/>
            <person name="Kyrpides N."/>
            <person name="Kim E."/>
            <person name="Newman D."/>
            <person name="Salticov C."/>
            <person name="Konstantinidis K."/>
            <person name="Klappenback J."/>
            <person name="Tiedje J."/>
            <person name="Richardson P."/>
        </authorList>
    </citation>
    <scope>NUCLEOTIDE SEQUENCE [LARGE SCALE GENOMIC DNA]</scope>
    <source>
        <strain>ANA-3</strain>
    </source>
</reference>
<keyword id="KW-0326">Glycosidase</keyword>
<keyword id="KW-0378">Hydrolase</keyword>
<keyword id="KW-0520">NAD</keyword>
<keyword id="KW-0732">Signal</keyword>
<comment type="function">
    <text evidence="1">Glycosidase.</text>
</comment>
<comment type="cofactor">
    <cofactor evidence="1">
        <name>NAD(+)</name>
        <dbReference type="ChEBI" id="CHEBI:57540"/>
    </cofactor>
    <text evidence="1">Binds 1 NAD(+) per subunit. The NAD(+) cannot dissociate.</text>
</comment>
<comment type="PTM">
    <text>Predicted to be exported by the Tat system. The position of the signal peptide cleavage has not been experimentally proven.</text>
</comment>
<comment type="similarity">
    <text evidence="3">Belongs to the Gfo/Idh/MocA family. Glycosyl hydrolase 109 subfamily.</text>
</comment>
<protein>
    <recommendedName>
        <fullName>Glycosyl hydrolase family 109 protein 2</fullName>
        <ecNumber>3.2.1.-</ecNumber>
    </recommendedName>
</protein>
<gene>
    <name type="ordered locus">Shewana3_2701</name>
</gene>
<proteinExistence type="inferred from homology"/>
<sequence>MSGFDRRSFLKASMVTAAATALAACASSERATGTTPKAAGKSVMGLVVPKMDEVRVGLIGVGERGIGFVHHFSRIEGARITAICDTDTLVLARAEKAINEYGRDKPAYFSKGDHAYRDLLNRDDVDIVVIATPWAWHHPMAKEAMLAGKHAFVEVPMAGTIEELWDLVDTAELTQRNCMMMENVCYGRDELMVLNMVRQGLFGELLHGEAAYIHELRWQMKEIDRKTGSWRTAYHAKYNGNLYPTHGLGPVAQYMNINRGDRLDYLTSVSSPSLGRAAYAKREFPADHQRNQLKYIGGDMNTSLIKTVKGRSIMVQHDTTTPRPYSRHNLIQGTNGVFAGFPNRIALENGGSGSYHEWDENMDSWYAKYDHPLWTRMGKEAEENGGHGGMDFLMCWRMIYCLRNGEALDQDVYDGAAWSAVFPLSVASVGDRGNSKDFPDFTRGVWQTAKPLGIVG</sequence>